<comment type="function">
    <text evidence="2 3 4 5">3-hydroxyacyl-CoA dehydrogenase-like protein; part of the Tox1A locus, one of the 2 loci that mediate the biosynthesis of T-toxin, a family of linear polyketides 37 to 45 carbons in length, of which the major component is 41 carbons, and which leads to high virulence to maize (PubMed:20192833, PubMed:8953776). One of the PKSs (PKS1 or PKS2) could synthesize a precursor, used subsequently by the other PKS as starter unit, to add additional carbons (PubMed:16529376). Variability in the length of the final carbon backbone C35-47 could be achieved by varying the number of condensation cycles, or use of different starter or extender units or might be due to decarboxylation of the penultimate product, catalyzed by DEC1 (PubMed:12236595). Additional proteins are required for the biosynthesis of T-toxin, including oxidoreductases RED1, RED2, RED3, LAM1 and OXI1, as well as esterase TOX9 (PubMed:20192833).</text>
</comment>
<comment type="pathway">
    <text evidence="4">Mycotoxin biosynthesis.</text>
</comment>
<comment type="disruption phenotype">
    <text evidence="4">Significantly reduces the production of T-toxin and decreases the virulence to maize (PubMed:20192833).</text>
</comment>
<comment type="similarity">
    <text evidence="7">Belongs to the 3-hydroxyacyl-CoA dehydrogenase family.</text>
</comment>
<dbReference type="EC" id="1.1.-.-" evidence="8"/>
<dbReference type="EMBL" id="DQ186598">
    <property type="protein sequence ID" value="ACP43390.1"/>
    <property type="molecule type" value="Genomic_DNA"/>
</dbReference>
<dbReference type="EMBL" id="KB733526">
    <property type="protein sequence ID" value="ENH98578.1"/>
    <property type="molecule type" value="Genomic_DNA"/>
</dbReference>
<dbReference type="RefSeq" id="XP_014072488.1">
    <property type="nucleotide sequence ID" value="XM_014217013.1"/>
</dbReference>
<dbReference type="SMR" id="N4WEA4"/>
<dbReference type="GeneID" id="25847228"/>
<dbReference type="HOGENOM" id="CLU_031652_0_0_1"/>
<dbReference type="OrthoDB" id="5958943at2759"/>
<dbReference type="PHI-base" id="PHI:2834"/>
<dbReference type="Proteomes" id="UP000012338">
    <property type="component" value="Unassembled WGS sequence"/>
</dbReference>
<dbReference type="GO" id="GO:0016616">
    <property type="term" value="F:oxidoreductase activity, acting on the CH-OH group of donors, NAD or NADP as acceptor"/>
    <property type="evidence" value="ECO:0007669"/>
    <property type="project" value="InterPro"/>
</dbReference>
<dbReference type="GO" id="GO:0006631">
    <property type="term" value="P:fatty acid metabolic process"/>
    <property type="evidence" value="ECO:0007669"/>
    <property type="project" value="InterPro"/>
</dbReference>
<dbReference type="Gene3D" id="1.10.1040.10">
    <property type="entry name" value="N-(1-d-carboxylethyl)-l-norvaline Dehydrogenase, domain 2"/>
    <property type="match status" value="1"/>
</dbReference>
<dbReference type="Gene3D" id="3.40.50.720">
    <property type="entry name" value="NAD(P)-binding Rossmann-like Domain"/>
    <property type="match status" value="1"/>
</dbReference>
<dbReference type="Gene3D" id="2.120.10.30">
    <property type="entry name" value="TolB, C-terminal domain"/>
    <property type="match status" value="2"/>
</dbReference>
<dbReference type="InterPro" id="IPR006108">
    <property type="entry name" value="3HC_DH_C"/>
</dbReference>
<dbReference type="InterPro" id="IPR011042">
    <property type="entry name" value="6-blade_b-propeller_TolB-like"/>
</dbReference>
<dbReference type="InterPro" id="IPR008927">
    <property type="entry name" value="6-PGluconate_DH-like_C_sf"/>
</dbReference>
<dbReference type="InterPro" id="IPR013328">
    <property type="entry name" value="6PGD_dom2"/>
</dbReference>
<dbReference type="InterPro" id="IPR000033">
    <property type="entry name" value="LDLR_classB_rpt"/>
</dbReference>
<dbReference type="PANTHER" id="PTHR48075:SF3">
    <property type="entry name" value="3-HYDROXYACYL-COA DEHYDROGENASE"/>
    <property type="match status" value="1"/>
</dbReference>
<dbReference type="PANTHER" id="PTHR48075">
    <property type="entry name" value="3-HYDROXYACYL-COA DEHYDROGENASE FAMILY PROTEIN"/>
    <property type="match status" value="1"/>
</dbReference>
<dbReference type="Pfam" id="PF00725">
    <property type="entry name" value="3HCDH"/>
    <property type="match status" value="1"/>
</dbReference>
<dbReference type="SMART" id="SM00135">
    <property type="entry name" value="LY"/>
    <property type="match status" value="4"/>
</dbReference>
<dbReference type="SUPFAM" id="SSF48179">
    <property type="entry name" value="6-phosphogluconate dehydrogenase C-terminal domain-like"/>
    <property type="match status" value="1"/>
</dbReference>
<dbReference type="SUPFAM" id="SSF101898">
    <property type="entry name" value="NHL repeat"/>
    <property type="match status" value="1"/>
</dbReference>
<dbReference type="SUPFAM" id="SSF63825">
    <property type="entry name" value="YWTD domain"/>
    <property type="match status" value="1"/>
</dbReference>
<reference key="1">
    <citation type="journal article" date="2010" name="Mol. Plant Microbe Interact.">
        <title>Six new genes required for production of T-toxin, a polyketide determinant of high virulence of Cochliobolus heterostrophus to maize.</title>
        <authorList>
            <person name="Inderbitzin P."/>
            <person name="Asvarak T."/>
            <person name="Turgeon B.G."/>
        </authorList>
    </citation>
    <scope>NUCLEOTIDE SEQUENCE [GENOMIC DNA]</scope>
    <scope>FUNCTION</scope>
    <scope>DISRUPTION PHENOTYPE</scope>
    <source>
        <strain>C4 / ATCC 48331 / race T</strain>
    </source>
</reference>
<reference key="2">
    <citation type="journal article" date="2012" name="PLoS Pathog.">
        <title>Diverse lifestyles and strategies of plant pathogenesis encoded in the genomes of eighteen Dothideomycetes fungi.</title>
        <authorList>
            <person name="Ohm R.A."/>
            <person name="Feau N."/>
            <person name="Henrissat B."/>
            <person name="Schoch C.L."/>
            <person name="Horwitz B.A."/>
            <person name="Barry K.W."/>
            <person name="Condon B.J."/>
            <person name="Copeland A.C."/>
            <person name="Dhillon B."/>
            <person name="Glaser F."/>
            <person name="Hesse C.N."/>
            <person name="Kosti I."/>
            <person name="LaButti K."/>
            <person name="Lindquist E.A."/>
            <person name="Lucas S."/>
            <person name="Salamov A.A."/>
            <person name="Bradshaw R.E."/>
            <person name="Ciuffetti L."/>
            <person name="Hamelin R.C."/>
            <person name="Kema G.H.J."/>
            <person name="Lawrence C."/>
            <person name="Scott J.A."/>
            <person name="Spatafora J.W."/>
            <person name="Turgeon B.G."/>
            <person name="de Wit P.J.G.M."/>
            <person name="Zhong S."/>
            <person name="Goodwin S.B."/>
            <person name="Grigoriev I.V."/>
        </authorList>
    </citation>
    <scope>NUCLEOTIDE SEQUENCE [LARGE SCALE GENOMIC DNA]</scope>
    <source>
        <strain>C4 / ATCC 48331 / race T</strain>
    </source>
</reference>
<reference key="3">
    <citation type="journal article" date="2013" name="PLoS Genet.">
        <title>Comparative genome structure, secondary metabolite, and effector coding capacity across Cochliobolus pathogens.</title>
        <authorList>
            <person name="Condon B.J."/>
            <person name="Leng Y."/>
            <person name="Wu D."/>
            <person name="Bushley K.E."/>
            <person name="Ohm R.A."/>
            <person name="Otillar R."/>
            <person name="Martin J."/>
            <person name="Schackwitz W."/>
            <person name="Grimwood J."/>
            <person name="MohdZainudin N."/>
            <person name="Xue C."/>
            <person name="Wang R."/>
            <person name="Manning V.A."/>
            <person name="Dhillon B."/>
            <person name="Tu Z.J."/>
            <person name="Steffenson B.J."/>
            <person name="Salamov A."/>
            <person name="Sun H."/>
            <person name="Lowry S."/>
            <person name="LaButti K."/>
            <person name="Han J."/>
            <person name="Copeland A."/>
            <person name="Lindquist E."/>
            <person name="Barry K."/>
            <person name="Schmutz J."/>
            <person name="Baker S.E."/>
            <person name="Ciuffetti L.M."/>
            <person name="Grigoriev I.V."/>
            <person name="Zhong S."/>
            <person name="Turgeon B.G."/>
        </authorList>
    </citation>
    <scope>NUCLEOTIDE SEQUENCE [LARGE SCALE GENOMIC DNA]</scope>
    <source>
        <strain>C4 / ATCC 48331 / race T</strain>
    </source>
</reference>
<reference key="4">
    <citation type="journal article" date="1996" name="Plant Cell">
        <title>A polyketide synthase is required for fungal virulence and production of the polyketide T-toxin.</title>
        <authorList>
            <person name="Yang G."/>
            <person name="Rose M.S."/>
            <person name="Turgeon B.G."/>
            <person name="Yoder O.C."/>
        </authorList>
    </citation>
    <scope>FUNCTION</scope>
    <source>
        <strain>C4 / ATCC 48331 / race T</strain>
    </source>
</reference>
<reference key="5">
    <citation type="journal article" date="2002" name="Mol. Plant Microbe Interact.">
        <title>A decarboxylase encoded at the Cochliobolus heterostrophus translocation-associated Tox1B locus is required for polyketide (T-toxin) biosynthesis and high virulence on T-cytoplasm maize.</title>
        <authorList>
            <person name="Rose M.S."/>
            <person name="Yun S.-H."/>
            <person name="Asvarak T."/>
            <person name="Lu S.-W."/>
            <person name="Yoder O.C."/>
            <person name="Turgeon B.G."/>
        </authorList>
    </citation>
    <scope>FUNCTION</scope>
    <source>
        <strain>C4 / ATCC 48331 / race T</strain>
    </source>
</reference>
<reference key="6">
    <citation type="journal article" date="2006" name="Mol. Plant Microbe Interact.">
        <title>Two polyketide synthase-encoding genes are required for biosynthesis of the polyketide virulence factor, T-toxin, by Cochliobolus heterostrophus.</title>
        <authorList>
            <person name="Baker S.E."/>
            <person name="Kroken S."/>
            <person name="Inderbitzin P."/>
            <person name="Asvarak T."/>
            <person name="Li B.Y."/>
            <person name="Shi L."/>
            <person name="Yoder O.C."/>
            <person name="Turgeon B.G."/>
        </authorList>
    </citation>
    <scope>FUNCTION</scope>
</reference>
<sequence>MTPSAKRRTLNTHYFMPPHVRVVELMTSGNTAPEIMSLLVDRMKTVGLKPFVAKRESTGFIQNRVWASIKREMLHVVAEGIVDAQTADDIFVETIVRPGTRPFAAMDYVGLDTVANIERTYAQERHLDTTYTVDYLQREFIDVGKLGIKSNKGGFYPPSTAADAVSTKPRIFVLDNGLSGQIDNLKQGKILEYSFEGEYIRTVFKDQYLPDGIAVSQEENVLFWTCMGSPGQKDGMIYAGKLDGNDIRPLIQQGIVHTPKQIVIDEANKKLYFTDREGLCIWRCDKDGSNLEQVVVTGDNNNECDRRDATRWCVGITFSHTLGKIFWTQKGASKGWQGRIFSANMTIPPGETAAHRKDKVCLLEGLAEPIDLDFHESTKTLYWTDRGEMPFGNTLNRLRFDDRGYALHTDSTPHLKHEIIARKFHEAIGLKIDARNEHVYVADLGGSICRCKLDGSDKVRLVFQEDRAWTGVALA</sequence>
<evidence type="ECO:0000250" key="1">
    <source>
        <dbReference type="UniProtKB" id="Q16836"/>
    </source>
</evidence>
<evidence type="ECO:0000269" key="2">
    <source>
    </source>
</evidence>
<evidence type="ECO:0000269" key="3">
    <source>
    </source>
</evidence>
<evidence type="ECO:0000269" key="4">
    <source>
    </source>
</evidence>
<evidence type="ECO:0000269" key="5">
    <source>
    </source>
</evidence>
<evidence type="ECO:0000303" key="6">
    <source>
    </source>
</evidence>
<evidence type="ECO:0000305" key="7"/>
<evidence type="ECO:0000305" key="8">
    <source>
    </source>
</evidence>
<proteinExistence type="inferred from homology"/>
<organism>
    <name type="scientific">Cochliobolus heterostrophus (strain C4 / ATCC 48331 / race T)</name>
    <name type="common">Southern corn leaf blight fungus</name>
    <name type="synonym">Bipolaris maydis</name>
    <dbReference type="NCBI Taxonomy" id="665024"/>
    <lineage>
        <taxon>Eukaryota</taxon>
        <taxon>Fungi</taxon>
        <taxon>Dikarya</taxon>
        <taxon>Ascomycota</taxon>
        <taxon>Pezizomycotina</taxon>
        <taxon>Dothideomycetes</taxon>
        <taxon>Pleosporomycetidae</taxon>
        <taxon>Pleosporales</taxon>
        <taxon>Pleosporineae</taxon>
        <taxon>Pleosporaceae</taxon>
        <taxon>Bipolaris</taxon>
    </lineage>
</organism>
<name>LAM1_COCH4</name>
<accession>N4WEA4</accession>
<accession>C3PTB1</accession>
<protein>
    <recommendedName>
        <fullName evidence="6">3-hydroxyacyl-CoA dehydrogenase-like protein LAM1</fullName>
        <ecNumber evidence="8">1.1.-.-</ecNumber>
    </recommendedName>
    <alternativeName>
        <fullName evidence="7">T-toxin biosynthesis protein LAM1</fullName>
    </alternativeName>
</protein>
<gene>
    <name evidence="6" type="primary">LAM1</name>
    <name type="ORF">COCC4DRAFT_67231</name>
</gene>
<keyword id="KW-0520">NAD</keyword>
<keyword id="KW-0560">Oxidoreductase</keyword>
<feature type="chain" id="PRO_0000437648" description="3-hydroxyacyl-CoA dehydrogenase-like protein LAM1">
    <location>
        <begin position="1"/>
        <end position="475"/>
    </location>
</feature>
<feature type="binding site" evidence="1">
    <location>
        <begin position="99"/>
        <end position="104"/>
    </location>
    <ligand>
        <name>NAD(+)</name>
        <dbReference type="ChEBI" id="CHEBI:57540"/>
    </ligand>
</feature>
<feature type="binding site" evidence="1">
    <location>
        <position position="149"/>
    </location>
    <ligand>
        <name>CoA</name>
        <dbReference type="ChEBI" id="CHEBI:57287"/>
    </ligand>
</feature>
<feature type="binding site" evidence="1">
    <location>
        <position position="245"/>
    </location>
    <ligand>
        <name>NAD(+)</name>
        <dbReference type="ChEBI" id="CHEBI:57540"/>
    </ligand>
</feature>